<keyword id="KW-0004">4Fe-4S</keyword>
<keyword id="KW-0963">Cytoplasm</keyword>
<keyword id="KW-0408">Iron</keyword>
<keyword id="KW-0411">Iron-sulfur</keyword>
<keyword id="KW-0479">Metal-binding</keyword>
<keyword id="KW-1185">Reference proteome</keyword>
<keyword id="KW-0949">S-adenosyl-L-methionine</keyword>
<keyword id="KW-0808">Transferase</keyword>
<keyword id="KW-0819">tRNA processing</keyword>
<proteinExistence type="inferred from homology"/>
<dbReference type="EC" id="2.8.4.3" evidence="1"/>
<dbReference type="EMBL" id="CP000319">
    <property type="protein sequence ID" value="ABE60923.1"/>
    <property type="molecule type" value="Genomic_DNA"/>
</dbReference>
<dbReference type="RefSeq" id="WP_011508630.1">
    <property type="nucleotide sequence ID" value="NC_007964.1"/>
</dbReference>
<dbReference type="SMR" id="Q1QS74"/>
<dbReference type="STRING" id="323097.Nham_0021"/>
<dbReference type="KEGG" id="nha:Nham_0021"/>
<dbReference type="eggNOG" id="COG0621">
    <property type="taxonomic scope" value="Bacteria"/>
</dbReference>
<dbReference type="HOGENOM" id="CLU_018697_2_2_5"/>
<dbReference type="OrthoDB" id="9805215at2"/>
<dbReference type="Proteomes" id="UP000001953">
    <property type="component" value="Chromosome"/>
</dbReference>
<dbReference type="GO" id="GO:0005829">
    <property type="term" value="C:cytosol"/>
    <property type="evidence" value="ECO:0007669"/>
    <property type="project" value="TreeGrafter"/>
</dbReference>
<dbReference type="GO" id="GO:0051539">
    <property type="term" value="F:4 iron, 4 sulfur cluster binding"/>
    <property type="evidence" value="ECO:0007669"/>
    <property type="project" value="UniProtKB-UniRule"/>
</dbReference>
<dbReference type="GO" id="GO:0046872">
    <property type="term" value="F:metal ion binding"/>
    <property type="evidence" value="ECO:0007669"/>
    <property type="project" value="UniProtKB-KW"/>
</dbReference>
<dbReference type="GO" id="GO:0035597">
    <property type="term" value="F:N6-isopentenyladenosine methylthiotransferase activity"/>
    <property type="evidence" value="ECO:0007669"/>
    <property type="project" value="TreeGrafter"/>
</dbReference>
<dbReference type="CDD" id="cd01335">
    <property type="entry name" value="Radical_SAM"/>
    <property type="match status" value="1"/>
</dbReference>
<dbReference type="FunFam" id="3.40.50.12160:FF:000003">
    <property type="entry name" value="CDK5 regulatory subunit-associated protein 1"/>
    <property type="match status" value="1"/>
</dbReference>
<dbReference type="FunFam" id="3.80.30.20:FF:000001">
    <property type="entry name" value="tRNA-2-methylthio-N(6)-dimethylallyladenosine synthase 2"/>
    <property type="match status" value="1"/>
</dbReference>
<dbReference type="Gene3D" id="3.40.50.12160">
    <property type="entry name" value="Methylthiotransferase, N-terminal domain"/>
    <property type="match status" value="1"/>
</dbReference>
<dbReference type="Gene3D" id="3.80.30.20">
    <property type="entry name" value="tm_1862 like domain"/>
    <property type="match status" value="1"/>
</dbReference>
<dbReference type="HAMAP" id="MF_01864">
    <property type="entry name" value="tRNA_metthiotr_MiaB"/>
    <property type="match status" value="1"/>
</dbReference>
<dbReference type="InterPro" id="IPR006638">
    <property type="entry name" value="Elp3/MiaA/NifB-like_rSAM"/>
</dbReference>
<dbReference type="InterPro" id="IPR005839">
    <property type="entry name" value="Methylthiotransferase"/>
</dbReference>
<dbReference type="InterPro" id="IPR020612">
    <property type="entry name" value="Methylthiotransferase_CS"/>
</dbReference>
<dbReference type="InterPro" id="IPR013848">
    <property type="entry name" value="Methylthiotransferase_N"/>
</dbReference>
<dbReference type="InterPro" id="IPR038135">
    <property type="entry name" value="Methylthiotransferase_N_sf"/>
</dbReference>
<dbReference type="InterPro" id="IPR006463">
    <property type="entry name" value="MiaB_methiolase"/>
</dbReference>
<dbReference type="InterPro" id="IPR007197">
    <property type="entry name" value="rSAM"/>
</dbReference>
<dbReference type="InterPro" id="IPR023404">
    <property type="entry name" value="rSAM_horseshoe"/>
</dbReference>
<dbReference type="InterPro" id="IPR002792">
    <property type="entry name" value="TRAM_dom"/>
</dbReference>
<dbReference type="NCBIfam" id="TIGR01574">
    <property type="entry name" value="miaB-methiolase"/>
    <property type="match status" value="1"/>
</dbReference>
<dbReference type="NCBIfam" id="TIGR00089">
    <property type="entry name" value="MiaB/RimO family radical SAM methylthiotransferase"/>
    <property type="match status" value="1"/>
</dbReference>
<dbReference type="PANTHER" id="PTHR43020">
    <property type="entry name" value="CDK5 REGULATORY SUBUNIT-ASSOCIATED PROTEIN 1"/>
    <property type="match status" value="1"/>
</dbReference>
<dbReference type="PANTHER" id="PTHR43020:SF2">
    <property type="entry name" value="MITOCHONDRIAL TRNA METHYLTHIOTRANSFERASE CDK5RAP1"/>
    <property type="match status" value="1"/>
</dbReference>
<dbReference type="Pfam" id="PF04055">
    <property type="entry name" value="Radical_SAM"/>
    <property type="match status" value="1"/>
</dbReference>
<dbReference type="Pfam" id="PF01938">
    <property type="entry name" value="TRAM"/>
    <property type="match status" value="1"/>
</dbReference>
<dbReference type="Pfam" id="PF00919">
    <property type="entry name" value="UPF0004"/>
    <property type="match status" value="1"/>
</dbReference>
<dbReference type="SFLD" id="SFLDF00273">
    <property type="entry name" value="(dimethylallyl)adenosine_tRNA"/>
    <property type="match status" value="1"/>
</dbReference>
<dbReference type="SFLD" id="SFLDG01082">
    <property type="entry name" value="B12-binding_domain_containing"/>
    <property type="match status" value="1"/>
</dbReference>
<dbReference type="SFLD" id="SFLDS00029">
    <property type="entry name" value="Radical_SAM"/>
    <property type="match status" value="1"/>
</dbReference>
<dbReference type="SMART" id="SM00729">
    <property type="entry name" value="Elp3"/>
    <property type="match status" value="1"/>
</dbReference>
<dbReference type="SUPFAM" id="SSF102114">
    <property type="entry name" value="Radical SAM enzymes"/>
    <property type="match status" value="1"/>
</dbReference>
<dbReference type="PROSITE" id="PS51449">
    <property type="entry name" value="MTTASE_N"/>
    <property type="match status" value="1"/>
</dbReference>
<dbReference type="PROSITE" id="PS01278">
    <property type="entry name" value="MTTASE_RADICAL"/>
    <property type="match status" value="1"/>
</dbReference>
<dbReference type="PROSITE" id="PS51918">
    <property type="entry name" value="RADICAL_SAM"/>
    <property type="match status" value="1"/>
</dbReference>
<dbReference type="PROSITE" id="PS50926">
    <property type="entry name" value="TRAM"/>
    <property type="match status" value="1"/>
</dbReference>
<organism>
    <name type="scientific">Nitrobacter hamburgensis (strain DSM 10229 / NCIMB 13809 / X14)</name>
    <dbReference type="NCBI Taxonomy" id="323097"/>
    <lineage>
        <taxon>Bacteria</taxon>
        <taxon>Pseudomonadati</taxon>
        <taxon>Pseudomonadota</taxon>
        <taxon>Alphaproteobacteria</taxon>
        <taxon>Hyphomicrobiales</taxon>
        <taxon>Nitrobacteraceae</taxon>
        <taxon>Nitrobacter</taxon>
    </lineage>
</organism>
<gene>
    <name evidence="1" type="primary">miaB</name>
    <name type="ordered locus">Nham_0021</name>
</gene>
<protein>
    <recommendedName>
        <fullName evidence="1">tRNA-2-methylthio-N(6)-dimethylallyladenosine synthase</fullName>
        <ecNumber evidence="1">2.8.4.3</ecNumber>
    </recommendedName>
    <alternativeName>
        <fullName evidence="1">(Dimethylallyl)adenosine tRNA methylthiotransferase MiaB</fullName>
    </alternativeName>
    <alternativeName>
        <fullName evidence="1">tRNA-i(6)A37 methylthiotransferase</fullName>
    </alternativeName>
</protein>
<reference key="1">
    <citation type="submission" date="2006-03" db="EMBL/GenBank/DDBJ databases">
        <title>Complete sequence of chromosome of Nitrobacter hamburgensis X14.</title>
        <authorList>
            <consortium name="US DOE Joint Genome Institute"/>
            <person name="Copeland A."/>
            <person name="Lucas S."/>
            <person name="Lapidus A."/>
            <person name="Barry K."/>
            <person name="Detter J.C."/>
            <person name="Glavina del Rio T."/>
            <person name="Hammon N."/>
            <person name="Israni S."/>
            <person name="Dalin E."/>
            <person name="Tice H."/>
            <person name="Pitluck S."/>
            <person name="Chain P."/>
            <person name="Malfatti S."/>
            <person name="Shin M."/>
            <person name="Vergez L."/>
            <person name="Schmutz J."/>
            <person name="Larimer F."/>
            <person name="Land M."/>
            <person name="Hauser L."/>
            <person name="Kyrpides N."/>
            <person name="Ivanova N."/>
            <person name="Ward B."/>
            <person name="Arp D."/>
            <person name="Klotz M."/>
            <person name="Stein L."/>
            <person name="O'Mullan G."/>
            <person name="Starkenburg S."/>
            <person name="Sayavedra L."/>
            <person name="Poret-Peterson A.T."/>
            <person name="Gentry M.E."/>
            <person name="Bruce D."/>
            <person name="Richardson P."/>
        </authorList>
    </citation>
    <scope>NUCLEOTIDE SEQUENCE [LARGE SCALE GENOMIC DNA]</scope>
    <source>
        <strain>DSM 10229 / NCIMB 13809 / X14</strain>
    </source>
</reference>
<sequence length="473" mass="51602">MTPPRKLHIKSYGCQMNVYDAQRMVDTLAAEGFVETASAEEADLVILNTCHIREKASEKVYSELGRLRAAKDQAARDGREMSVVVAGCVAQAEGDEIIRRAPVVDVVVGPQSYHHLPQLLARAKADGRALETEFPVEDKFGFLPQPSRQAIRARGISAFVTVQEGCDKFCTFCVVPYTRGAEVSRPVAKIVEDVQRLADNGVREITLIGQNVNAYHGDGPDGRPWPFGKLLHRLADIPGIVRLRYSTSHPRDVEDSLIEAHRDLGALMPFVHLPVQSGSDRILEAMNRRHTADDYRRVVDRFRHVRQDIAFSSDFIVGFPGETEQDFTATLALVTQIGYAGAYSFKYSPRPGTPAAEMKETVSTADMDERLVRLQNLIDSQQSAFNRAAVGTTVDVLFERAARNPGQIVGRTAYLQPAHVVASADIIGQILPVTVASLERYSLLGSLASAPASRASADDAPPVGASSPAIMGV</sequence>
<name>MIAB_NITHX</name>
<feature type="chain" id="PRO_0000374408" description="tRNA-2-methylthio-N(6)-dimethylallyladenosine synthase">
    <location>
        <begin position="1"/>
        <end position="473"/>
    </location>
</feature>
<feature type="domain" description="MTTase N-terminal" evidence="1">
    <location>
        <begin position="5"/>
        <end position="125"/>
    </location>
</feature>
<feature type="domain" description="Radical SAM core" evidence="2">
    <location>
        <begin position="152"/>
        <end position="384"/>
    </location>
</feature>
<feature type="domain" description="TRAM" evidence="1">
    <location>
        <begin position="387"/>
        <end position="449"/>
    </location>
</feature>
<feature type="region of interest" description="Disordered" evidence="3">
    <location>
        <begin position="453"/>
        <end position="473"/>
    </location>
</feature>
<feature type="compositionally biased region" description="Low complexity" evidence="3">
    <location>
        <begin position="453"/>
        <end position="462"/>
    </location>
</feature>
<feature type="binding site" evidence="1">
    <location>
        <position position="14"/>
    </location>
    <ligand>
        <name>[4Fe-4S] cluster</name>
        <dbReference type="ChEBI" id="CHEBI:49883"/>
        <label>1</label>
    </ligand>
</feature>
<feature type="binding site" evidence="1">
    <location>
        <position position="50"/>
    </location>
    <ligand>
        <name>[4Fe-4S] cluster</name>
        <dbReference type="ChEBI" id="CHEBI:49883"/>
        <label>1</label>
    </ligand>
</feature>
<feature type="binding site" evidence="1">
    <location>
        <position position="88"/>
    </location>
    <ligand>
        <name>[4Fe-4S] cluster</name>
        <dbReference type="ChEBI" id="CHEBI:49883"/>
        <label>1</label>
    </ligand>
</feature>
<feature type="binding site" evidence="1">
    <location>
        <position position="166"/>
    </location>
    <ligand>
        <name>[4Fe-4S] cluster</name>
        <dbReference type="ChEBI" id="CHEBI:49883"/>
        <label>2</label>
        <note>4Fe-4S-S-AdoMet</note>
    </ligand>
</feature>
<feature type="binding site" evidence="1">
    <location>
        <position position="170"/>
    </location>
    <ligand>
        <name>[4Fe-4S] cluster</name>
        <dbReference type="ChEBI" id="CHEBI:49883"/>
        <label>2</label>
        <note>4Fe-4S-S-AdoMet</note>
    </ligand>
</feature>
<feature type="binding site" evidence="1">
    <location>
        <position position="173"/>
    </location>
    <ligand>
        <name>[4Fe-4S] cluster</name>
        <dbReference type="ChEBI" id="CHEBI:49883"/>
        <label>2</label>
        <note>4Fe-4S-S-AdoMet</note>
    </ligand>
</feature>
<accession>Q1QS74</accession>
<evidence type="ECO:0000255" key="1">
    <source>
        <dbReference type="HAMAP-Rule" id="MF_01864"/>
    </source>
</evidence>
<evidence type="ECO:0000255" key="2">
    <source>
        <dbReference type="PROSITE-ProRule" id="PRU01266"/>
    </source>
</evidence>
<evidence type="ECO:0000256" key="3">
    <source>
        <dbReference type="SAM" id="MobiDB-lite"/>
    </source>
</evidence>
<comment type="function">
    <text evidence="1">Catalyzes the methylthiolation of N6-(dimethylallyl)adenosine (i(6)A), leading to the formation of 2-methylthio-N6-(dimethylallyl)adenosine (ms(2)i(6)A) at position 37 in tRNAs that read codons beginning with uridine.</text>
</comment>
<comment type="catalytic activity">
    <reaction evidence="1">
        <text>N(6)-dimethylallyladenosine(37) in tRNA + (sulfur carrier)-SH + AH2 + 2 S-adenosyl-L-methionine = 2-methylsulfanyl-N(6)-dimethylallyladenosine(37) in tRNA + (sulfur carrier)-H + 5'-deoxyadenosine + L-methionine + A + S-adenosyl-L-homocysteine + 2 H(+)</text>
        <dbReference type="Rhea" id="RHEA:37067"/>
        <dbReference type="Rhea" id="RHEA-COMP:10375"/>
        <dbReference type="Rhea" id="RHEA-COMP:10376"/>
        <dbReference type="Rhea" id="RHEA-COMP:14737"/>
        <dbReference type="Rhea" id="RHEA-COMP:14739"/>
        <dbReference type="ChEBI" id="CHEBI:13193"/>
        <dbReference type="ChEBI" id="CHEBI:15378"/>
        <dbReference type="ChEBI" id="CHEBI:17319"/>
        <dbReference type="ChEBI" id="CHEBI:17499"/>
        <dbReference type="ChEBI" id="CHEBI:29917"/>
        <dbReference type="ChEBI" id="CHEBI:57844"/>
        <dbReference type="ChEBI" id="CHEBI:57856"/>
        <dbReference type="ChEBI" id="CHEBI:59789"/>
        <dbReference type="ChEBI" id="CHEBI:64428"/>
        <dbReference type="ChEBI" id="CHEBI:74415"/>
        <dbReference type="ChEBI" id="CHEBI:74417"/>
        <dbReference type="EC" id="2.8.4.3"/>
    </reaction>
</comment>
<comment type="cofactor">
    <cofactor evidence="1">
        <name>[4Fe-4S] cluster</name>
        <dbReference type="ChEBI" id="CHEBI:49883"/>
    </cofactor>
    <text evidence="1">Binds 2 [4Fe-4S] clusters. One cluster is coordinated with 3 cysteines and an exchangeable S-adenosyl-L-methionine.</text>
</comment>
<comment type="subunit">
    <text evidence="1">Monomer.</text>
</comment>
<comment type="subcellular location">
    <subcellularLocation>
        <location evidence="1">Cytoplasm</location>
    </subcellularLocation>
</comment>
<comment type="similarity">
    <text evidence="1">Belongs to the methylthiotransferase family. MiaB subfamily.</text>
</comment>